<feature type="chain" id="PRO_1000014979" description="Small ribosomal subunit protein uS10">
    <location>
        <begin position="1"/>
        <end position="103"/>
    </location>
</feature>
<reference key="1">
    <citation type="submission" date="2006-12" db="EMBL/GenBank/DDBJ databases">
        <title>Complete sequence of chromosome 1 of Acidovorax sp. JS42.</title>
        <authorList>
            <person name="Copeland A."/>
            <person name="Lucas S."/>
            <person name="Lapidus A."/>
            <person name="Barry K."/>
            <person name="Detter J.C."/>
            <person name="Glavina del Rio T."/>
            <person name="Dalin E."/>
            <person name="Tice H."/>
            <person name="Pitluck S."/>
            <person name="Chertkov O."/>
            <person name="Brettin T."/>
            <person name="Bruce D."/>
            <person name="Han C."/>
            <person name="Tapia R."/>
            <person name="Gilna P."/>
            <person name="Schmutz J."/>
            <person name="Larimer F."/>
            <person name="Land M."/>
            <person name="Hauser L."/>
            <person name="Kyrpides N."/>
            <person name="Kim E."/>
            <person name="Stahl D."/>
            <person name="Richardson P."/>
        </authorList>
    </citation>
    <scope>NUCLEOTIDE SEQUENCE [LARGE SCALE GENOMIC DNA]</scope>
    <source>
        <strain>JS42</strain>
    </source>
</reference>
<name>RS10_ACISJ</name>
<protein>
    <recommendedName>
        <fullName evidence="1">Small ribosomal subunit protein uS10</fullName>
    </recommendedName>
    <alternativeName>
        <fullName evidence="2">30S ribosomal protein S10</fullName>
    </alternativeName>
</protein>
<keyword id="KW-0687">Ribonucleoprotein</keyword>
<keyword id="KW-0689">Ribosomal protein</keyword>
<dbReference type="EMBL" id="CP000539">
    <property type="protein sequence ID" value="ABM40531.1"/>
    <property type="molecule type" value="Genomic_DNA"/>
</dbReference>
<dbReference type="SMR" id="A1W2Q6"/>
<dbReference type="STRING" id="232721.Ajs_0277"/>
<dbReference type="KEGG" id="ajs:Ajs_0277"/>
<dbReference type="eggNOG" id="COG0051">
    <property type="taxonomic scope" value="Bacteria"/>
</dbReference>
<dbReference type="HOGENOM" id="CLU_122625_1_3_4"/>
<dbReference type="Proteomes" id="UP000000645">
    <property type="component" value="Chromosome"/>
</dbReference>
<dbReference type="GO" id="GO:1990904">
    <property type="term" value="C:ribonucleoprotein complex"/>
    <property type="evidence" value="ECO:0007669"/>
    <property type="project" value="UniProtKB-KW"/>
</dbReference>
<dbReference type="GO" id="GO:0005840">
    <property type="term" value="C:ribosome"/>
    <property type="evidence" value="ECO:0007669"/>
    <property type="project" value="UniProtKB-KW"/>
</dbReference>
<dbReference type="GO" id="GO:0003735">
    <property type="term" value="F:structural constituent of ribosome"/>
    <property type="evidence" value="ECO:0007669"/>
    <property type="project" value="InterPro"/>
</dbReference>
<dbReference type="GO" id="GO:0000049">
    <property type="term" value="F:tRNA binding"/>
    <property type="evidence" value="ECO:0007669"/>
    <property type="project" value="UniProtKB-UniRule"/>
</dbReference>
<dbReference type="GO" id="GO:0006412">
    <property type="term" value="P:translation"/>
    <property type="evidence" value="ECO:0007669"/>
    <property type="project" value="UniProtKB-UniRule"/>
</dbReference>
<dbReference type="FunFam" id="3.30.70.600:FF:000001">
    <property type="entry name" value="30S ribosomal protein S10"/>
    <property type="match status" value="1"/>
</dbReference>
<dbReference type="Gene3D" id="3.30.70.600">
    <property type="entry name" value="Ribosomal protein S10 domain"/>
    <property type="match status" value="1"/>
</dbReference>
<dbReference type="HAMAP" id="MF_00508">
    <property type="entry name" value="Ribosomal_uS10"/>
    <property type="match status" value="1"/>
</dbReference>
<dbReference type="InterPro" id="IPR001848">
    <property type="entry name" value="Ribosomal_uS10"/>
</dbReference>
<dbReference type="InterPro" id="IPR018268">
    <property type="entry name" value="Ribosomal_uS10_CS"/>
</dbReference>
<dbReference type="InterPro" id="IPR027486">
    <property type="entry name" value="Ribosomal_uS10_dom"/>
</dbReference>
<dbReference type="InterPro" id="IPR036838">
    <property type="entry name" value="Ribosomal_uS10_dom_sf"/>
</dbReference>
<dbReference type="NCBIfam" id="NF001861">
    <property type="entry name" value="PRK00596.1"/>
    <property type="match status" value="1"/>
</dbReference>
<dbReference type="NCBIfam" id="TIGR01049">
    <property type="entry name" value="rpsJ_bact"/>
    <property type="match status" value="1"/>
</dbReference>
<dbReference type="PANTHER" id="PTHR11700">
    <property type="entry name" value="30S RIBOSOMAL PROTEIN S10 FAMILY MEMBER"/>
    <property type="match status" value="1"/>
</dbReference>
<dbReference type="Pfam" id="PF00338">
    <property type="entry name" value="Ribosomal_S10"/>
    <property type="match status" value="1"/>
</dbReference>
<dbReference type="PRINTS" id="PR00971">
    <property type="entry name" value="RIBOSOMALS10"/>
</dbReference>
<dbReference type="SMART" id="SM01403">
    <property type="entry name" value="Ribosomal_S10"/>
    <property type="match status" value="1"/>
</dbReference>
<dbReference type="SUPFAM" id="SSF54999">
    <property type="entry name" value="Ribosomal protein S10"/>
    <property type="match status" value="1"/>
</dbReference>
<dbReference type="PROSITE" id="PS00361">
    <property type="entry name" value="RIBOSOMAL_S10"/>
    <property type="match status" value="1"/>
</dbReference>
<organism>
    <name type="scientific">Acidovorax sp. (strain JS42)</name>
    <dbReference type="NCBI Taxonomy" id="232721"/>
    <lineage>
        <taxon>Bacteria</taxon>
        <taxon>Pseudomonadati</taxon>
        <taxon>Pseudomonadota</taxon>
        <taxon>Betaproteobacteria</taxon>
        <taxon>Burkholderiales</taxon>
        <taxon>Comamonadaceae</taxon>
        <taxon>Acidovorax</taxon>
    </lineage>
</organism>
<evidence type="ECO:0000255" key="1">
    <source>
        <dbReference type="HAMAP-Rule" id="MF_00508"/>
    </source>
</evidence>
<evidence type="ECO:0000305" key="2"/>
<accession>A1W2Q6</accession>
<comment type="function">
    <text evidence="1">Involved in the binding of tRNA to the ribosomes.</text>
</comment>
<comment type="subunit">
    <text evidence="1">Part of the 30S ribosomal subunit.</text>
</comment>
<comment type="similarity">
    <text evidence="1">Belongs to the universal ribosomal protein uS10 family.</text>
</comment>
<gene>
    <name evidence="1" type="primary">rpsJ</name>
    <name type="ordered locus">Ajs_0277</name>
</gene>
<proteinExistence type="inferred from homology"/>
<sequence>MSKQKIRIRLKAFDYKLIDQSAAEIVDTAKRTGAIVKGPVPLPTRMKRFDILRSPHVNKTSRDQFEIRTHQRLMDIVDPTDKTVDALMKLDLPAGVDVEIKLQ</sequence>